<evidence type="ECO:0000255" key="1">
    <source>
        <dbReference type="HAMAP-Rule" id="MF_01937"/>
    </source>
</evidence>
<dbReference type="EC" id="2.5.1.74" evidence="1"/>
<dbReference type="EMBL" id="L42023">
    <property type="protein sequence ID" value="AAC22167.1"/>
    <property type="molecule type" value="Genomic_DNA"/>
</dbReference>
<dbReference type="PIR" id="H64153">
    <property type="entry name" value="H64153"/>
</dbReference>
<dbReference type="RefSeq" id="NP_438667.2">
    <property type="nucleotide sequence ID" value="NC_000907.1"/>
</dbReference>
<dbReference type="SMR" id="P44739"/>
<dbReference type="STRING" id="71421.HI_0509"/>
<dbReference type="EnsemblBacteria" id="AAC22167">
    <property type="protein sequence ID" value="AAC22167"/>
    <property type="gene ID" value="HI_0509"/>
</dbReference>
<dbReference type="KEGG" id="hin:HI_0509"/>
<dbReference type="PATRIC" id="fig|71421.8.peg.528"/>
<dbReference type="eggNOG" id="COG1575">
    <property type="taxonomic scope" value="Bacteria"/>
</dbReference>
<dbReference type="HOGENOM" id="CLU_043611_1_1_6"/>
<dbReference type="OrthoDB" id="9767568at2"/>
<dbReference type="PhylomeDB" id="P44739"/>
<dbReference type="UniPathway" id="UPA00079">
    <property type="reaction ID" value="UER00168"/>
</dbReference>
<dbReference type="Proteomes" id="UP000000579">
    <property type="component" value="Chromosome"/>
</dbReference>
<dbReference type="GO" id="GO:0005886">
    <property type="term" value="C:plasma membrane"/>
    <property type="evidence" value="ECO:0000318"/>
    <property type="project" value="GO_Central"/>
</dbReference>
<dbReference type="GO" id="GO:0046428">
    <property type="term" value="F:1,4-dihydroxy-2-naphthoate polyprenyltransferase activity"/>
    <property type="evidence" value="ECO:0007669"/>
    <property type="project" value="UniProtKB-UniRule"/>
</dbReference>
<dbReference type="GO" id="GO:0004659">
    <property type="term" value="F:prenyltransferase activity"/>
    <property type="evidence" value="ECO:0000318"/>
    <property type="project" value="GO_Central"/>
</dbReference>
<dbReference type="GO" id="GO:0009234">
    <property type="term" value="P:menaquinone biosynthetic process"/>
    <property type="evidence" value="ECO:0000318"/>
    <property type="project" value="GO_Central"/>
</dbReference>
<dbReference type="GO" id="GO:0042371">
    <property type="term" value="P:vitamin K biosynthetic process"/>
    <property type="evidence" value="ECO:0000318"/>
    <property type="project" value="GO_Central"/>
</dbReference>
<dbReference type="CDD" id="cd13962">
    <property type="entry name" value="PT_UbiA_UBIAD1"/>
    <property type="match status" value="1"/>
</dbReference>
<dbReference type="FunFam" id="1.10.357.140:FF:000016">
    <property type="entry name" value="1,4-dihydroxy-2-naphthoate octaprenyltransferase"/>
    <property type="match status" value="1"/>
</dbReference>
<dbReference type="Gene3D" id="1.10.357.140">
    <property type="entry name" value="UbiA prenyltransferase"/>
    <property type="match status" value="1"/>
</dbReference>
<dbReference type="Gene3D" id="1.20.120.1780">
    <property type="entry name" value="UbiA prenyltransferase"/>
    <property type="match status" value="1"/>
</dbReference>
<dbReference type="HAMAP" id="MF_01937">
    <property type="entry name" value="MenA_1"/>
    <property type="match status" value="1"/>
</dbReference>
<dbReference type="InterPro" id="IPR004657">
    <property type="entry name" value="MenA"/>
</dbReference>
<dbReference type="InterPro" id="IPR000537">
    <property type="entry name" value="UbiA_prenyltransferase"/>
</dbReference>
<dbReference type="InterPro" id="IPR044878">
    <property type="entry name" value="UbiA_sf"/>
</dbReference>
<dbReference type="InterPro" id="IPR026046">
    <property type="entry name" value="UBIAD1"/>
</dbReference>
<dbReference type="NCBIfam" id="TIGR00751">
    <property type="entry name" value="menA"/>
    <property type="match status" value="1"/>
</dbReference>
<dbReference type="NCBIfam" id="NF004750">
    <property type="entry name" value="PRK06080.1-2"/>
    <property type="match status" value="1"/>
</dbReference>
<dbReference type="PANTHER" id="PTHR13929">
    <property type="entry name" value="1,4-DIHYDROXY-2-NAPHTHOATE OCTAPRENYLTRANSFERASE"/>
    <property type="match status" value="1"/>
</dbReference>
<dbReference type="PANTHER" id="PTHR13929:SF0">
    <property type="entry name" value="UBIA PRENYLTRANSFERASE DOMAIN-CONTAINING PROTEIN 1"/>
    <property type="match status" value="1"/>
</dbReference>
<dbReference type="Pfam" id="PF01040">
    <property type="entry name" value="UbiA"/>
    <property type="match status" value="1"/>
</dbReference>
<dbReference type="PIRSF" id="PIRSF005355">
    <property type="entry name" value="UBIAD1"/>
    <property type="match status" value="1"/>
</dbReference>
<protein>
    <recommendedName>
        <fullName evidence="1">1,4-dihydroxy-2-naphthoate octaprenyltransferase</fullName>
        <shortName evidence="1">DHNA-octaprenyltransferase</shortName>
        <ecNumber evidence="1">2.5.1.74</ecNumber>
    </recommendedName>
</protein>
<organism>
    <name type="scientific">Haemophilus influenzae (strain ATCC 51907 / DSM 11121 / KW20 / Rd)</name>
    <dbReference type="NCBI Taxonomy" id="71421"/>
    <lineage>
        <taxon>Bacteria</taxon>
        <taxon>Pseudomonadati</taxon>
        <taxon>Pseudomonadota</taxon>
        <taxon>Gammaproteobacteria</taxon>
        <taxon>Pasteurellales</taxon>
        <taxon>Pasteurellaceae</taxon>
        <taxon>Haemophilus</taxon>
    </lineage>
</organism>
<accession>P44739</accession>
<keyword id="KW-0997">Cell inner membrane</keyword>
<keyword id="KW-1003">Cell membrane</keyword>
<keyword id="KW-0472">Membrane</keyword>
<keyword id="KW-0474">Menaquinone biosynthesis</keyword>
<keyword id="KW-1185">Reference proteome</keyword>
<keyword id="KW-0808">Transferase</keyword>
<keyword id="KW-0812">Transmembrane</keyword>
<keyword id="KW-1133">Transmembrane helix</keyword>
<sequence>MRSKKMINEKLKMWWETARPKTLPLALASIFTGSALGYWANPQGFNGLVMVLCLLTTILLQVLSNFANDYGDHQKGSDTEERIGPLRGIQKGAISAKELKWGLILMVMASFLSGSFLIGIAYENLSDLFAFAGLGILAIVAAITYTVGVKPYGYMGLGDISVLVFFGLLGVGGTYYLQTHSIDSHIILPAIGSGLLASAVLNINNLRDIEQDAKAGKNTLAVRLGAYKGRVYHCILLSVAALCYLAFAVATAISWTNYLFVLAMPLLAKHAIFVYCSQQPSELRPILAQMSMISLLINILFSLGLLIG</sequence>
<feature type="chain" id="PRO_0000096415" description="1,4-dihydroxy-2-naphthoate octaprenyltransferase">
    <location>
        <begin position="1"/>
        <end position="308"/>
    </location>
</feature>
<feature type="transmembrane region" description="Helical" evidence="1">
    <location>
        <begin position="22"/>
        <end position="42"/>
    </location>
</feature>
<feature type="transmembrane region" description="Helical" evidence="1">
    <location>
        <begin position="47"/>
        <end position="67"/>
    </location>
</feature>
<feature type="transmembrane region" description="Helical" evidence="1">
    <location>
        <begin position="101"/>
        <end position="121"/>
    </location>
</feature>
<feature type="transmembrane region" description="Helical" evidence="1">
    <location>
        <begin position="129"/>
        <end position="149"/>
    </location>
</feature>
<feature type="transmembrane region" description="Helical" evidence="1">
    <location>
        <begin position="153"/>
        <end position="173"/>
    </location>
</feature>
<feature type="transmembrane region" description="Helical" evidence="1">
    <location>
        <begin position="186"/>
        <end position="206"/>
    </location>
</feature>
<feature type="transmembrane region" description="Helical" evidence="1">
    <location>
        <begin position="235"/>
        <end position="255"/>
    </location>
</feature>
<feature type="transmembrane region" description="Helical" evidence="1">
    <location>
        <begin position="256"/>
        <end position="276"/>
    </location>
</feature>
<feature type="transmembrane region" description="Helical" evidence="1">
    <location>
        <begin position="286"/>
        <end position="306"/>
    </location>
</feature>
<name>MENA_HAEIN</name>
<gene>
    <name evidence="1" type="primary">menA</name>
    <name type="ordered locus">HI_0509</name>
</gene>
<proteinExistence type="inferred from homology"/>
<reference key="1">
    <citation type="journal article" date="1995" name="Science">
        <title>Whole-genome random sequencing and assembly of Haemophilus influenzae Rd.</title>
        <authorList>
            <person name="Fleischmann R.D."/>
            <person name="Adams M.D."/>
            <person name="White O."/>
            <person name="Clayton R.A."/>
            <person name="Kirkness E.F."/>
            <person name="Kerlavage A.R."/>
            <person name="Bult C.J."/>
            <person name="Tomb J.-F."/>
            <person name="Dougherty B.A."/>
            <person name="Merrick J.M."/>
            <person name="McKenney K."/>
            <person name="Sutton G.G."/>
            <person name="FitzHugh W."/>
            <person name="Fields C.A."/>
            <person name="Gocayne J.D."/>
            <person name="Scott J.D."/>
            <person name="Shirley R."/>
            <person name="Liu L.-I."/>
            <person name="Glodek A."/>
            <person name="Kelley J.M."/>
            <person name="Weidman J.F."/>
            <person name="Phillips C.A."/>
            <person name="Spriggs T."/>
            <person name="Hedblom E."/>
            <person name="Cotton M.D."/>
            <person name="Utterback T.R."/>
            <person name="Hanna M.C."/>
            <person name="Nguyen D.T."/>
            <person name="Saudek D.M."/>
            <person name="Brandon R.C."/>
            <person name="Fine L.D."/>
            <person name="Fritchman J.L."/>
            <person name="Fuhrmann J.L."/>
            <person name="Geoghagen N.S.M."/>
            <person name="Gnehm C.L."/>
            <person name="McDonald L.A."/>
            <person name="Small K.V."/>
            <person name="Fraser C.M."/>
            <person name="Smith H.O."/>
            <person name="Venter J.C."/>
        </authorList>
    </citation>
    <scope>NUCLEOTIDE SEQUENCE [LARGE SCALE GENOMIC DNA]</scope>
    <source>
        <strain>ATCC 51907 / DSM 11121 / KW20 / Rd</strain>
    </source>
</reference>
<comment type="function">
    <text evidence="1">Conversion of 1,4-dihydroxy-2-naphthoate (DHNA) to demethylmenaquinone (DMK).</text>
</comment>
<comment type="catalytic activity">
    <reaction evidence="1">
        <text>an all-trans-polyprenyl diphosphate + 1,4-dihydroxy-2-naphthoate + H(+) = a 2-demethylmenaquinol + CO2 + diphosphate</text>
        <dbReference type="Rhea" id="RHEA:26478"/>
        <dbReference type="Rhea" id="RHEA-COMP:9563"/>
        <dbReference type="Rhea" id="RHEA-COMP:9564"/>
        <dbReference type="ChEBI" id="CHEBI:11173"/>
        <dbReference type="ChEBI" id="CHEBI:15378"/>
        <dbReference type="ChEBI" id="CHEBI:16526"/>
        <dbReference type="ChEBI" id="CHEBI:33019"/>
        <dbReference type="ChEBI" id="CHEBI:55437"/>
        <dbReference type="ChEBI" id="CHEBI:58914"/>
        <dbReference type="EC" id="2.5.1.74"/>
    </reaction>
</comment>
<comment type="pathway">
    <text evidence="1">Quinol/quinone metabolism; menaquinone biosynthesis; menaquinol from 1,4-dihydroxy-2-naphthoate: step 1/2.</text>
</comment>
<comment type="subcellular location">
    <subcellularLocation>
        <location evidence="1">Cell inner membrane</location>
        <topology evidence="1">Multi-pass membrane protein</topology>
    </subcellularLocation>
</comment>
<comment type="similarity">
    <text evidence="1">Belongs to the MenA family. Type 1 subfamily.</text>
</comment>